<reference key="1">
    <citation type="submission" date="2006-06" db="EMBL/GenBank/DDBJ databases">
        <authorList>
            <consortium name="Sanger Xenopus tropicalis EST/cDNA project"/>
        </authorList>
    </citation>
    <scope>NUCLEOTIDE SEQUENCE [LARGE SCALE MRNA]</scope>
    <source>
        <tissue>Neurula</tissue>
    </source>
</reference>
<reference key="2">
    <citation type="submission" date="2004-08" db="EMBL/GenBank/DDBJ databases">
        <authorList>
            <consortium name="NIH - Xenopus Gene Collection (XGC) project"/>
        </authorList>
    </citation>
    <scope>NUCLEOTIDE SEQUENCE [LARGE SCALE MRNA]</scope>
    <source>
        <tissue>Embryo</tissue>
    </source>
</reference>
<sequence length="214" mass="24990">MNVFRISGDVSHLLAIIILLLKMWKSKSCAGISGKSQLLFALVFTTRYLDLFTVFISAYNTVMKIVFLVCAYVTVYLIYGKFRKAYDSENDTFRLEFLLVPVIGLSFLENYEFTPLEILWTFSIYLESVAILPQLFMISKTGEAESITTHYLFFLGLYRVLYLANWIWRYHTEKFYDQIAVVSGVVQTIFYFDFFYLYITKVLKGKKLSLPMPV</sequence>
<organism>
    <name type="scientific">Xenopus tropicalis</name>
    <name type="common">Western clawed frog</name>
    <name type="synonym">Silurana tropicalis</name>
    <dbReference type="NCBI Taxonomy" id="8364"/>
    <lineage>
        <taxon>Eukaryota</taxon>
        <taxon>Metazoa</taxon>
        <taxon>Chordata</taxon>
        <taxon>Craniata</taxon>
        <taxon>Vertebrata</taxon>
        <taxon>Euteleostomi</taxon>
        <taxon>Amphibia</taxon>
        <taxon>Batrachia</taxon>
        <taxon>Anura</taxon>
        <taxon>Pipoidea</taxon>
        <taxon>Pipidae</taxon>
        <taxon>Xenopodinae</taxon>
        <taxon>Xenopus</taxon>
        <taxon>Silurana</taxon>
    </lineage>
</organism>
<accession>Q66JF2</accession>
<proteinExistence type="evidence at transcript level"/>
<keyword id="KW-0968">Cytoplasmic vesicle</keyword>
<keyword id="KW-0256">Endoplasmic reticulum</keyword>
<keyword id="KW-0931">ER-Golgi transport</keyword>
<keyword id="KW-0333">Golgi apparatus</keyword>
<keyword id="KW-0472">Membrane</keyword>
<keyword id="KW-0653">Protein transport</keyword>
<keyword id="KW-0675">Receptor</keyword>
<keyword id="KW-1185">Reference proteome</keyword>
<keyword id="KW-0812">Transmembrane</keyword>
<keyword id="KW-1133">Transmembrane helix</keyword>
<keyword id="KW-0813">Transport</keyword>
<evidence type="ECO:0000250" key="1">
    <source>
        <dbReference type="UniProtKB" id="O43731"/>
    </source>
</evidence>
<evidence type="ECO:0000250" key="2">
    <source>
        <dbReference type="UniProtKB" id="P24390"/>
    </source>
</evidence>
<evidence type="ECO:0000250" key="3">
    <source>
        <dbReference type="UniProtKB" id="P33947"/>
    </source>
</evidence>
<evidence type="ECO:0000250" key="4">
    <source>
        <dbReference type="UniProtKB" id="Q5ZKX9"/>
    </source>
</evidence>
<evidence type="ECO:0000305" key="5"/>
<comment type="function">
    <text evidence="1">Receptor for the C-terminal sequence motif K-D-E-L that is present on endoplasmic reticulum resident proteins and that mediates their recycling from the Golgi back to the endoplasmic reticulum.</text>
</comment>
<comment type="subcellular location">
    <subcellularLocation>
        <location evidence="1">Endoplasmic reticulum membrane</location>
        <topology evidence="4">Multi-pass membrane protein</topology>
    </subcellularLocation>
    <subcellularLocation>
        <location evidence="1">Golgi apparatus membrane</location>
        <topology evidence="4">Multi-pass membrane protein</topology>
    </subcellularLocation>
    <subcellularLocation>
        <location evidence="1">Cytoplasmic vesicle</location>
        <location evidence="1">COPI-coated vesicle membrane</location>
        <topology evidence="4">Multi-pass membrane protein</topology>
    </subcellularLocation>
    <text evidence="1">Localized in the Golgi in the absence of bound proteins with the sequence motif K-D-E-L. Trafficks back to the endoplasmic reticulum together with cargo proteins containing the sequence motif K-D-E-L.</text>
</comment>
<comment type="domain">
    <text evidence="2 4">Binds the C-terminal sequence motif K-D-E-L in a hydrophilic cavity between the transmembrane domains. This triggers a conformation change that exposes a Lys-rich patch on the cytosolic surface of the protein (By similarity). This patch mediates recycling from the Golgi to the endoplasmic reticulum, probably via COPI vesicles (By similarity).</text>
</comment>
<comment type="similarity">
    <text evidence="5">Belongs to the ERD2 family.</text>
</comment>
<gene>
    <name type="primary">kdelr3</name>
    <name type="ORF">TNeu014i13.1</name>
</gene>
<feature type="chain" id="PRO_0000252353" description="ER lumen protein-retaining receptor 3">
    <location>
        <begin position="1"/>
        <end position="214"/>
    </location>
</feature>
<feature type="topological domain" description="Lumenal" evidence="5">
    <location>
        <begin position="1"/>
        <end position="4"/>
    </location>
</feature>
<feature type="transmembrane region" description="Helical" evidence="4">
    <location>
        <begin position="5"/>
        <end position="24"/>
    </location>
</feature>
<feature type="topological domain" description="Cytoplasmic" evidence="5">
    <location>
        <begin position="25"/>
        <end position="32"/>
    </location>
</feature>
<feature type="transmembrane region" description="Helical" evidence="4">
    <location>
        <begin position="33"/>
        <end position="52"/>
    </location>
</feature>
<feature type="topological domain" description="Lumenal" evidence="5">
    <location>
        <begin position="53"/>
        <end position="58"/>
    </location>
</feature>
<feature type="transmembrane region" description="Helical" evidence="4">
    <location>
        <begin position="59"/>
        <end position="79"/>
    </location>
</feature>
<feature type="topological domain" description="Cytoplasmic" evidence="5">
    <location>
        <begin position="80"/>
        <end position="92"/>
    </location>
</feature>
<feature type="transmembrane region" description="Helical" evidence="4">
    <location>
        <begin position="93"/>
        <end position="110"/>
    </location>
</feature>
<feature type="topological domain" description="Lumenal" evidence="5">
    <location>
        <begin position="111"/>
        <end position="116"/>
    </location>
</feature>
<feature type="transmembrane region" description="Helical" evidence="4">
    <location>
        <begin position="117"/>
        <end position="135"/>
    </location>
</feature>
<feature type="topological domain" description="Cytoplasmic" evidence="5">
    <location>
        <begin position="136"/>
        <end position="149"/>
    </location>
</feature>
<feature type="transmembrane region" description="Helical" evidence="4">
    <location>
        <begin position="150"/>
        <end position="168"/>
    </location>
</feature>
<feature type="topological domain" description="Lumenal" evidence="5">
    <location>
        <begin position="169"/>
        <end position="178"/>
    </location>
</feature>
<feature type="transmembrane region" description="Helical" evidence="4">
    <location>
        <begin position="179"/>
        <end position="199"/>
    </location>
</feature>
<feature type="topological domain" description="Cytoplasmic" evidence="5">
    <location>
        <begin position="200"/>
        <end position="214"/>
    </location>
</feature>
<feature type="region of interest" description="Interaction with the K-D-E-L motif on target proteins" evidence="4">
    <location>
        <begin position="47"/>
        <end position="48"/>
    </location>
</feature>
<feature type="region of interest" description="Interaction with the K-D-E-L motif on target proteins" evidence="4">
    <location>
        <begin position="159"/>
        <end position="169"/>
    </location>
</feature>
<feature type="region of interest" description="Important for recycling of cargo proteins with the sequence motif K-D-E-L from the Golgi to the endoplasmic reticulum" evidence="3">
    <location>
        <begin position="204"/>
        <end position="207"/>
    </location>
</feature>
<feature type="site" description="Interaction with the K-D-E-L motif on target proteins" evidence="4">
    <location>
        <position position="5"/>
    </location>
</feature>
<feature type="site" description="Interaction with the K-D-E-L motif on target proteins" evidence="4">
    <location>
        <position position="117"/>
    </location>
</feature>
<feature type="site" description="Important for recycling of cargo proteins with the sequence motif K-D-E-L from the Golgi to the endoplasmic reticulum" evidence="2">
    <location>
        <position position="193"/>
    </location>
</feature>
<protein>
    <recommendedName>
        <fullName>ER lumen protein-retaining receptor 3</fullName>
    </recommendedName>
    <alternativeName>
        <fullName>KDEL endoplasmic reticulum protein retention receptor 3</fullName>
        <shortName>KDEL receptor 3</shortName>
    </alternativeName>
</protein>
<dbReference type="EMBL" id="CR942706">
    <property type="protein sequence ID" value="CAJ83336.1"/>
    <property type="molecule type" value="mRNA"/>
</dbReference>
<dbReference type="EMBL" id="BC080938">
    <property type="protein sequence ID" value="AAH80938.1"/>
    <property type="molecule type" value="mRNA"/>
</dbReference>
<dbReference type="RefSeq" id="NP_001008052.1">
    <property type="nucleotide sequence ID" value="NM_001008051.1"/>
</dbReference>
<dbReference type="SMR" id="Q66JF2"/>
<dbReference type="FunCoup" id="Q66JF2">
    <property type="interactions" value="877"/>
</dbReference>
<dbReference type="STRING" id="8364.ENSXETP00000042529"/>
<dbReference type="PaxDb" id="8364-ENSXETP00000034820"/>
<dbReference type="DNASU" id="493414"/>
<dbReference type="GeneID" id="493414"/>
<dbReference type="KEGG" id="xtr:493414"/>
<dbReference type="AGR" id="Xenbase:XB-GENE-489131"/>
<dbReference type="CTD" id="11015"/>
<dbReference type="Xenbase" id="XB-GENE-489131">
    <property type="gene designation" value="kdelr3"/>
</dbReference>
<dbReference type="eggNOG" id="KOG3106">
    <property type="taxonomic scope" value="Eukaryota"/>
</dbReference>
<dbReference type="HOGENOM" id="CLU_057784_0_0_1"/>
<dbReference type="InParanoid" id="Q66JF2"/>
<dbReference type="OMA" id="QEVLWAF"/>
<dbReference type="OrthoDB" id="7694678at2759"/>
<dbReference type="PhylomeDB" id="Q66JF2"/>
<dbReference type="TreeFam" id="TF314792"/>
<dbReference type="Reactome" id="R-XTR-6807878">
    <property type="pathway name" value="COPI-mediated anterograde transport"/>
</dbReference>
<dbReference type="Reactome" id="R-XTR-6811434">
    <property type="pathway name" value="COPI-dependent Golgi-to-ER retrograde traffic"/>
</dbReference>
<dbReference type="Proteomes" id="UP000008143">
    <property type="component" value="Chromosome 4"/>
</dbReference>
<dbReference type="GO" id="GO:0030663">
    <property type="term" value="C:COPI-coated vesicle membrane"/>
    <property type="evidence" value="ECO:0007669"/>
    <property type="project" value="UniProtKB-SubCell"/>
</dbReference>
<dbReference type="GO" id="GO:0005789">
    <property type="term" value="C:endoplasmic reticulum membrane"/>
    <property type="evidence" value="ECO:0000250"/>
    <property type="project" value="UniProtKB"/>
</dbReference>
<dbReference type="GO" id="GO:0000139">
    <property type="term" value="C:Golgi membrane"/>
    <property type="evidence" value="ECO:0000250"/>
    <property type="project" value="UniProtKB"/>
</dbReference>
<dbReference type="GO" id="GO:0005046">
    <property type="term" value="F:KDEL sequence binding"/>
    <property type="evidence" value="ECO:0000250"/>
    <property type="project" value="UniProtKB"/>
</dbReference>
<dbReference type="GO" id="GO:0006621">
    <property type="term" value="P:protein retention in ER lumen"/>
    <property type="evidence" value="ECO:0007669"/>
    <property type="project" value="InterPro"/>
</dbReference>
<dbReference type="GO" id="GO:0015031">
    <property type="term" value="P:protein transport"/>
    <property type="evidence" value="ECO:0007669"/>
    <property type="project" value="UniProtKB-KW"/>
</dbReference>
<dbReference type="GO" id="GO:0006890">
    <property type="term" value="P:retrograde vesicle-mediated transport, Golgi to endoplasmic reticulum"/>
    <property type="evidence" value="ECO:0000250"/>
    <property type="project" value="UniProtKB"/>
</dbReference>
<dbReference type="InterPro" id="IPR000133">
    <property type="entry name" value="ER_ret_rcpt"/>
</dbReference>
<dbReference type="PANTHER" id="PTHR10585">
    <property type="entry name" value="ER LUMEN PROTEIN RETAINING RECEPTOR"/>
    <property type="match status" value="1"/>
</dbReference>
<dbReference type="Pfam" id="PF00810">
    <property type="entry name" value="ER_lumen_recept"/>
    <property type="match status" value="1"/>
</dbReference>
<dbReference type="PRINTS" id="PR00660">
    <property type="entry name" value="ERLUMENR"/>
</dbReference>
<dbReference type="PROSITE" id="PS00951">
    <property type="entry name" value="ER_LUMEN_RECEPTOR_1"/>
    <property type="match status" value="1"/>
</dbReference>
<dbReference type="PROSITE" id="PS00952">
    <property type="entry name" value="ER_LUMEN_RECEPTOR_2"/>
    <property type="match status" value="1"/>
</dbReference>
<name>ERD23_XENTR</name>